<sequence>MSVHIGAKTGEIAERILLPGDPLRAKYIAETFLEGAVCYNEVRGMLGFTGTYKGERISVQGTGMGVPSISIYVNELIQSYGVKTLIRVGTCGAIQPDVRVRDVILAMSASTDSNMNRLIFRGRDYAPTADFHLLRTAYEVGVEKGLALKVGNVFTADMFYNDEPNWETWARYGVLAVEMETAALYTLAAKFGCRALSVLTVSDHILTGEETTAEERQMTFNEMIEVALEAAIRNGA</sequence>
<reference key="1">
    <citation type="journal article" date="2004" name="Nucleic Acids Res.">
        <title>Thermoadaptation trait revealed by the genome sequence of thermophilic Geobacillus kaustophilus.</title>
        <authorList>
            <person name="Takami H."/>
            <person name="Takaki Y."/>
            <person name="Chee G.-J."/>
            <person name="Nishi S."/>
            <person name="Shimamura S."/>
            <person name="Suzuki H."/>
            <person name="Matsui S."/>
            <person name="Uchiyama I."/>
        </authorList>
    </citation>
    <scope>NUCLEOTIDE SEQUENCE [LARGE SCALE GENOMIC DNA]</scope>
    <source>
        <strain>HTA426</strain>
    </source>
</reference>
<keyword id="KW-0328">Glycosyltransferase</keyword>
<keyword id="KW-1185">Reference proteome</keyword>
<keyword id="KW-0808">Transferase</keyword>
<accession>Q5KZM1</accession>
<organism>
    <name type="scientific">Geobacillus kaustophilus (strain HTA426)</name>
    <dbReference type="NCBI Taxonomy" id="235909"/>
    <lineage>
        <taxon>Bacteria</taxon>
        <taxon>Bacillati</taxon>
        <taxon>Bacillota</taxon>
        <taxon>Bacilli</taxon>
        <taxon>Bacillales</taxon>
        <taxon>Anoxybacillaceae</taxon>
        <taxon>Geobacillus</taxon>
        <taxon>Geobacillus thermoleovorans group</taxon>
    </lineage>
</organism>
<name>DEOD_GEOKA</name>
<evidence type="ECO:0000250" key="1">
    <source>
        <dbReference type="UniProtKB" id="P50389"/>
    </source>
</evidence>
<evidence type="ECO:0000255" key="2">
    <source>
        <dbReference type="HAMAP-Rule" id="MF_01627"/>
    </source>
</evidence>
<gene>
    <name evidence="2" type="primary">deoD</name>
    <name type="ordered locus">GK1580</name>
</gene>
<protein>
    <recommendedName>
        <fullName evidence="2">Purine nucleoside phosphorylase DeoD-type</fullName>
        <shortName evidence="2">PNP</shortName>
        <ecNumber evidence="2">2.4.2.1</ecNumber>
    </recommendedName>
</protein>
<dbReference type="EC" id="2.4.2.1" evidence="2"/>
<dbReference type="EMBL" id="BA000043">
    <property type="protein sequence ID" value="BAD75865.1"/>
    <property type="molecule type" value="Genomic_DNA"/>
</dbReference>
<dbReference type="RefSeq" id="WP_011231075.1">
    <property type="nucleotide sequence ID" value="NC_006510.1"/>
</dbReference>
<dbReference type="SMR" id="Q5KZM1"/>
<dbReference type="STRING" id="235909.GK1580"/>
<dbReference type="GeneID" id="32063486"/>
<dbReference type="KEGG" id="gka:GK1580"/>
<dbReference type="PATRIC" id="fig|235909.7.peg.1701"/>
<dbReference type="eggNOG" id="COG0813">
    <property type="taxonomic scope" value="Bacteria"/>
</dbReference>
<dbReference type="HOGENOM" id="CLU_068457_2_0_9"/>
<dbReference type="Proteomes" id="UP000001172">
    <property type="component" value="Chromosome"/>
</dbReference>
<dbReference type="GO" id="GO:0005829">
    <property type="term" value="C:cytosol"/>
    <property type="evidence" value="ECO:0007669"/>
    <property type="project" value="TreeGrafter"/>
</dbReference>
<dbReference type="GO" id="GO:0004731">
    <property type="term" value="F:purine-nucleoside phosphorylase activity"/>
    <property type="evidence" value="ECO:0007669"/>
    <property type="project" value="UniProtKB-UniRule"/>
</dbReference>
<dbReference type="GO" id="GO:0006152">
    <property type="term" value="P:purine nucleoside catabolic process"/>
    <property type="evidence" value="ECO:0007669"/>
    <property type="project" value="TreeGrafter"/>
</dbReference>
<dbReference type="CDD" id="cd09006">
    <property type="entry name" value="PNP_EcPNPI-like"/>
    <property type="match status" value="1"/>
</dbReference>
<dbReference type="Gene3D" id="3.40.50.1580">
    <property type="entry name" value="Nucleoside phosphorylase domain"/>
    <property type="match status" value="1"/>
</dbReference>
<dbReference type="HAMAP" id="MF_01627">
    <property type="entry name" value="Pur_nucleosid_phosp"/>
    <property type="match status" value="1"/>
</dbReference>
<dbReference type="InterPro" id="IPR004402">
    <property type="entry name" value="DeoD-type"/>
</dbReference>
<dbReference type="InterPro" id="IPR018016">
    <property type="entry name" value="Nucleoside_phosphorylase_CS"/>
</dbReference>
<dbReference type="InterPro" id="IPR000845">
    <property type="entry name" value="Nucleoside_phosphorylase_d"/>
</dbReference>
<dbReference type="InterPro" id="IPR035994">
    <property type="entry name" value="Nucleoside_phosphorylase_sf"/>
</dbReference>
<dbReference type="NCBIfam" id="TIGR00107">
    <property type="entry name" value="deoD"/>
    <property type="match status" value="1"/>
</dbReference>
<dbReference type="NCBIfam" id="NF004489">
    <property type="entry name" value="PRK05819.1"/>
    <property type="match status" value="1"/>
</dbReference>
<dbReference type="NCBIfam" id="NF009914">
    <property type="entry name" value="PRK13374.1"/>
    <property type="match status" value="1"/>
</dbReference>
<dbReference type="PANTHER" id="PTHR43691:SF11">
    <property type="entry name" value="FI09636P-RELATED"/>
    <property type="match status" value="1"/>
</dbReference>
<dbReference type="PANTHER" id="PTHR43691">
    <property type="entry name" value="URIDINE PHOSPHORYLASE"/>
    <property type="match status" value="1"/>
</dbReference>
<dbReference type="Pfam" id="PF01048">
    <property type="entry name" value="PNP_UDP_1"/>
    <property type="match status" value="1"/>
</dbReference>
<dbReference type="SUPFAM" id="SSF53167">
    <property type="entry name" value="Purine and uridine phosphorylases"/>
    <property type="match status" value="1"/>
</dbReference>
<dbReference type="PROSITE" id="PS01232">
    <property type="entry name" value="PNP_UDP_1"/>
    <property type="match status" value="1"/>
</dbReference>
<comment type="function">
    <text evidence="2">Catalyzes the reversible phosphorolytic breakdown of the N-glycosidic bond in the beta-(deoxy)ribonucleoside molecules, with the formation of the corresponding free purine bases and pentose-1-phosphate.</text>
</comment>
<comment type="catalytic activity">
    <reaction evidence="2">
        <text>a purine D-ribonucleoside + phosphate = a purine nucleobase + alpha-D-ribose 1-phosphate</text>
        <dbReference type="Rhea" id="RHEA:19805"/>
        <dbReference type="ChEBI" id="CHEBI:26386"/>
        <dbReference type="ChEBI" id="CHEBI:43474"/>
        <dbReference type="ChEBI" id="CHEBI:57720"/>
        <dbReference type="ChEBI" id="CHEBI:142355"/>
        <dbReference type="EC" id="2.4.2.1"/>
    </reaction>
</comment>
<comment type="catalytic activity">
    <reaction evidence="2">
        <text>a purine 2'-deoxy-D-ribonucleoside + phosphate = a purine nucleobase + 2-deoxy-alpha-D-ribose 1-phosphate</text>
        <dbReference type="Rhea" id="RHEA:36431"/>
        <dbReference type="ChEBI" id="CHEBI:26386"/>
        <dbReference type="ChEBI" id="CHEBI:43474"/>
        <dbReference type="ChEBI" id="CHEBI:57259"/>
        <dbReference type="ChEBI" id="CHEBI:142361"/>
        <dbReference type="EC" id="2.4.2.1"/>
    </reaction>
</comment>
<comment type="subunit">
    <text evidence="2">Homohexamer; trimer of homodimers.</text>
</comment>
<comment type="similarity">
    <text evidence="2">Belongs to the PNP/UDP phosphorylase family.</text>
</comment>
<feature type="chain" id="PRO_0000063133" description="Purine nucleoside phosphorylase DeoD-type">
    <location>
        <begin position="1"/>
        <end position="236"/>
    </location>
</feature>
<feature type="active site" description="Proton donor" evidence="2">
    <location>
        <position position="203"/>
    </location>
</feature>
<feature type="binding site" evidence="1">
    <location>
        <position position="4"/>
    </location>
    <ligand>
        <name>a purine D-ribonucleoside</name>
        <dbReference type="ChEBI" id="CHEBI:142355"/>
        <note>ligand shared between dimeric partners</note>
    </ligand>
</feature>
<feature type="binding site" description="in other chain" evidence="1">
    <location>
        <position position="20"/>
    </location>
    <ligand>
        <name>phosphate</name>
        <dbReference type="ChEBI" id="CHEBI:43474"/>
        <note>ligand shared between dimeric partners</note>
    </ligand>
</feature>
<feature type="binding site" description="in other chain" evidence="1">
    <location>
        <position position="24"/>
    </location>
    <ligand>
        <name>phosphate</name>
        <dbReference type="ChEBI" id="CHEBI:43474"/>
        <note>ligand shared between dimeric partners</note>
    </ligand>
</feature>
<feature type="binding site" evidence="1">
    <location>
        <position position="43"/>
    </location>
    <ligand>
        <name>phosphate</name>
        <dbReference type="ChEBI" id="CHEBI:43474"/>
        <note>ligand shared between dimeric partners</note>
    </ligand>
</feature>
<feature type="binding site" description="in other chain" evidence="1">
    <location>
        <begin position="87"/>
        <end position="90"/>
    </location>
    <ligand>
        <name>phosphate</name>
        <dbReference type="ChEBI" id="CHEBI:43474"/>
        <note>ligand shared between dimeric partners</note>
    </ligand>
</feature>
<feature type="binding site" description="in other chain" evidence="1">
    <location>
        <begin position="178"/>
        <end position="180"/>
    </location>
    <ligand>
        <name>a purine D-ribonucleoside</name>
        <dbReference type="ChEBI" id="CHEBI:142355"/>
        <note>ligand shared between dimeric partners</note>
    </ligand>
</feature>
<feature type="binding site" description="in other chain" evidence="1">
    <location>
        <begin position="202"/>
        <end position="203"/>
    </location>
    <ligand>
        <name>a purine D-ribonucleoside</name>
        <dbReference type="ChEBI" id="CHEBI:142355"/>
        <note>ligand shared between dimeric partners</note>
    </ligand>
</feature>
<feature type="site" description="Important for catalytic activity" evidence="2">
    <location>
        <position position="216"/>
    </location>
</feature>
<proteinExistence type="inferred from homology"/>